<sequence>MAHSHSHADSHLPKDNNARRLLFAFIVTAGFMLLEVVGGILSGSLALLADAGHMLTDAAALLFALLVVQFSRRPPTVRHTFGWLRLTTLAAFVNAIALVVITLLIVWEAIERFYTPRPVAGNLMMVIAVAGLLANLFAFWILHRGSDEKNLNVRAAALHVMGDLLGSVGAIVAALIIIWTGWTPADPILSILVSVLVLRSAWRLLKDSVNELLEGAPVSLDINALQRHLSREIPEVRNVHHVHVWMVGEKPVMTLHAQVIPPHDHDALLERIQDFLMHEYHIAHATIQMEYQMCHGPDCHLNQTPSGHVHHH</sequence>
<proteinExistence type="inferred from homology"/>
<evidence type="ECO:0000255" key="1">
    <source>
        <dbReference type="HAMAP-Rule" id="MF_00552"/>
    </source>
</evidence>
<keyword id="KW-0997">Cell inner membrane</keyword>
<keyword id="KW-1003">Cell membrane</keyword>
<keyword id="KW-0406">Ion transport</keyword>
<keyword id="KW-0472">Membrane</keyword>
<keyword id="KW-0812">Transmembrane</keyword>
<keyword id="KW-1133">Transmembrane helix</keyword>
<keyword id="KW-0813">Transport</keyword>
<keyword id="KW-0862">Zinc</keyword>
<keyword id="KW-0864">Zinc transport</keyword>
<gene>
    <name evidence="1" type="primary">zitB</name>
    <name type="ordered locus">STY0799</name>
    <name type="ordered locus">t2120</name>
</gene>
<comment type="function">
    <text evidence="1">Involved in zinc efflux across the cytoplasmic membrane, thus reducing zinc accumulation in the cytoplasm and rendering bacteria more resistant to zinc. It may contribute to zinc homeostasis at low concentrations of zinc.</text>
</comment>
<comment type="subcellular location">
    <subcellularLocation>
        <location evidence="1">Cell inner membrane</location>
        <topology evidence="1">Multi-pass membrane protein</topology>
    </subcellularLocation>
</comment>
<comment type="similarity">
    <text evidence="1">Belongs to the cation diffusion facilitator (CDF) transporter (TC 2.A.4) family. SLC30A subfamily.</text>
</comment>
<dbReference type="EMBL" id="AL513382">
    <property type="protein sequence ID" value="CAD05215.1"/>
    <property type="molecule type" value="Genomic_DNA"/>
</dbReference>
<dbReference type="EMBL" id="AE014613">
    <property type="protein sequence ID" value="AAO69737.1"/>
    <property type="molecule type" value="Genomic_DNA"/>
</dbReference>
<dbReference type="RefSeq" id="NP_455309.1">
    <property type="nucleotide sequence ID" value="NC_003198.1"/>
</dbReference>
<dbReference type="RefSeq" id="WP_000951257.1">
    <property type="nucleotide sequence ID" value="NZ_WSUR01000021.1"/>
</dbReference>
<dbReference type="SMR" id="Q8Z8B6"/>
<dbReference type="STRING" id="220341.gene:17584805"/>
<dbReference type="KEGG" id="stt:t2120"/>
<dbReference type="KEGG" id="sty:STY0799"/>
<dbReference type="PATRIC" id="fig|220341.7.peg.804"/>
<dbReference type="eggNOG" id="COG1230">
    <property type="taxonomic scope" value="Bacteria"/>
</dbReference>
<dbReference type="HOGENOM" id="CLU_013430_0_0_6"/>
<dbReference type="OMA" id="GHEKMLH"/>
<dbReference type="OrthoDB" id="9809646at2"/>
<dbReference type="Proteomes" id="UP000000541">
    <property type="component" value="Chromosome"/>
</dbReference>
<dbReference type="Proteomes" id="UP000002670">
    <property type="component" value="Chromosome"/>
</dbReference>
<dbReference type="GO" id="GO:0005886">
    <property type="term" value="C:plasma membrane"/>
    <property type="evidence" value="ECO:0007669"/>
    <property type="project" value="UniProtKB-SubCell"/>
</dbReference>
<dbReference type="GO" id="GO:0005385">
    <property type="term" value="F:zinc ion transmembrane transporter activity"/>
    <property type="evidence" value="ECO:0007669"/>
    <property type="project" value="InterPro"/>
</dbReference>
<dbReference type="FunFam" id="1.20.1510.10:FF:000016">
    <property type="entry name" value="Zinc transporter ZitB"/>
    <property type="match status" value="1"/>
</dbReference>
<dbReference type="Gene3D" id="1.20.1510.10">
    <property type="entry name" value="Cation efflux protein transmembrane domain"/>
    <property type="match status" value="1"/>
</dbReference>
<dbReference type="HAMAP" id="MF_00552">
    <property type="entry name" value="ZitB"/>
    <property type="match status" value="1"/>
</dbReference>
<dbReference type="InterPro" id="IPR002524">
    <property type="entry name" value="Cation_efflux"/>
</dbReference>
<dbReference type="InterPro" id="IPR036837">
    <property type="entry name" value="Cation_efflux_CTD_sf"/>
</dbReference>
<dbReference type="InterPro" id="IPR027469">
    <property type="entry name" value="Cation_efflux_TMD_sf"/>
</dbReference>
<dbReference type="InterPro" id="IPR050681">
    <property type="entry name" value="CDF/SLC30A"/>
</dbReference>
<dbReference type="InterPro" id="IPR023500">
    <property type="entry name" value="Zn_transptr_ZitB"/>
</dbReference>
<dbReference type="NCBIfam" id="TIGR01297">
    <property type="entry name" value="CDF"/>
    <property type="match status" value="1"/>
</dbReference>
<dbReference type="NCBIfam" id="NF002923">
    <property type="entry name" value="PRK03557.1"/>
    <property type="match status" value="1"/>
</dbReference>
<dbReference type="PANTHER" id="PTHR11562">
    <property type="entry name" value="CATION EFFLUX PROTEIN/ ZINC TRANSPORTER"/>
    <property type="match status" value="1"/>
</dbReference>
<dbReference type="PANTHER" id="PTHR11562:SF17">
    <property type="entry name" value="RE54080P-RELATED"/>
    <property type="match status" value="1"/>
</dbReference>
<dbReference type="Pfam" id="PF01545">
    <property type="entry name" value="Cation_efflux"/>
    <property type="match status" value="1"/>
</dbReference>
<dbReference type="SUPFAM" id="SSF160240">
    <property type="entry name" value="Cation efflux protein cytoplasmic domain-like"/>
    <property type="match status" value="1"/>
</dbReference>
<dbReference type="SUPFAM" id="SSF161111">
    <property type="entry name" value="Cation efflux protein transmembrane domain-like"/>
    <property type="match status" value="1"/>
</dbReference>
<reference key="1">
    <citation type="journal article" date="2001" name="Nature">
        <title>Complete genome sequence of a multiple drug resistant Salmonella enterica serovar Typhi CT18.</title>
        <authorList>
            <person name="Parkhill J."/>
            <person name="Dougan G."/>
            <person name="James K.D."/>
            <person name="Thomson N.R."/>
            <person name="Pickard D."/>
            <person name="Wain J."/>
            <person name="Churcher C.M."/>
            <person name="Mungall K.L."/>
            <person name="Bentley S.D."/>
            <person name="Holden M.T.G."/>
            <person name="Sebaihia M."/>
            <person name="Baker S."/>
            <person name="Basham D."/>
            <person name="Brooks K."/>
            <person name="Chillingworth T."/>
            <person name="Connerton P."/>
            <person name="Cronin A."/>
            <person name="Davis P."/>
            <person name="Davies R.M."/>
            <person name="Dowd L."/>
            <person name="White N."/>
            <person name="Farrar J."/>
            <person name="Feltwell T."/>
            <person name="Hamlin N."/>
            <person name="Haque A."/>
            <person name="Hien T.T."/>
            <person name="Holroyd S."/>
            <person name="Jagels K."/>
            <person name="Krogh A."/>
            <person name="Larsen T.S."/>
            <person name="Leather S."/>
            <person name="Moule S."/>
            <person name="O'Gaora P."/>
            <person name="Parry C."/>
            <person name="Quail M.A."/>
            <person name="Rutherford K.M."/>
            <person name="Simmonds M."/>
            <person name="Skelton J."/>
            <person name="Stevens K."/>
            <person name="Whitehead S."/>
            <person name="Barrell B.G."/>
        </authorList>
    </citation>
    <scope>NUCLEOTIDE SEQUENCE [LARGE SCALE GENOMIC DNA]</scope>
    <source>
        <strain>CT18</strain>
    </source>
</reference>
<reference key="2">
    <citation type="journal article" date="2003" name="J. Bacteriol.">
        <title>Comparative genomics of Salmonella enterica serovar Typhi strains Ty2 and CT18.</title>
        <authorList>
            <person name="Deng W."/>
            <person name="Liou S.-R."/>
            <person name="Plunkett G. III"/>
            <person name="Mayhew G.F."/>
            <person name="Rose D.J."/>
            <person name="Burland V."/>
            <person name="Kodoyianni V."/>
            <person name="Schwartz D.C."/>
            <person name="Blattner F.R."/>
        </authorList>
    </citation>
    <scope>NUCLEOTIDE SEQUENCE [LARGE SCALE GENOMIC DNA]</scope>
    <source>
        <strain>ATCC 700931 / Ty2</strain>
    </source>
</reference>
<protein>
    <recommendedName>
        <fullName evidence="1">Zinc transporter ZitB</fullName>
    </recommendedName>
</protein>
<name>ZITB_SALTI</name>
<accession>Q8Z8B6</accession>
<organism>
    <name type="scientific">Salmonella typhi</name>
    <dbReference type="NCBI Taxonomy" id="90370"/>
    <lineage>
        <taxon>Bacteria</taxon>
        <taxon>Pseudomonadati</taxon>
        <taxon>Pseudomonadota</taxon>
        <taxon>Gammaproteobacteria</taxon>
        <taxon>Enterobacterales</taxon>
        <taxon>Enterobacteriaceae</taxon>
        <taxon>Salmonella</taxon>
    </lineage>
</organism>
<feature type="chain" id="PRO_0000206110" description="Zinc transporter ZitB">
    <location>
        <begin position="1"/>
        <end position="312"/>
    </location>
</feature>
<feature type="transmembrane region" description="Helical" evidence="1">
    <location>
        <begin position="21"/>
        <end position="41"/>
    </location>
</feature>
<feature type="transmembrane region" description="Helical" evidence="1">
    <location>
        <begin position="48"/>
        <end position="68"/>
    </location>
</feature>
<feature type="transmembrane region" description="Helical" evidence="1">
    <location>
        <begin position="90"/>
        <end position="110"/>
    </location>
</feature>
<feature type="transmembrane region" description="Helical" evidence="1">
    <location>
        <begin position="123"/>
        <end position="143"/>
    </location>
</feature>
<feature type="transmembrane region" description="Helical" evidence="1">
    <location>
        <begin position="164"/>
        <end position="184"/>
    </location>
</feature>